<accession>Q98HE3</accession>
<keyword id="KW-0975">Bacterial flagellum</keyword>
<evidence type="ECO:0000250" key="1"/>
<evidence type="ECO:0000305" key="2"/>
<gene>
    <name type="primary">flgF</name>
    <name type="ordered locus">mlr2907</name>
</gene>
<name>FLGF_RHILO</name>
<protein>
    <recommendedName>
        <fullName>Flagellar basal-body rod protein FlgF</fullName>
    </recommendedName>
</protein>
<sequence>MQDSLYVALSAQMALERRLDTIADNVANANTVGFRATGVKFEDMVSGTGQKSVSFASSGKTYLSGAHGSLSETGNPFDFAIQGDAWFAIDTPAGTVMTRDGRFSMNENGELMSIEGHPVLDAGGAPIQLDPRNGPPKAGADGSLRQNDQLVGSIGLYNFDPGENFVRYGNSGIVPARTPEPVTDRSDVGIAQGFVEESNVNPVLEMTRLIMVQRAFENTAALMRQTASSSDEAIKTLGSKS</sequence>
<dbReference type="EMBL" id="BA000012">
    <property type="protein sequence ID" value="BAB49923.1"/>
    <property type="molecule type" value="Genomic_DNA"/>
</dbReference>
<dbReference type="RefSeq" id="WP_010911270.1">
    <property type="nucleotide sequence ID" value="NC_002678.2"/>
</dbReference>
<dbReference type="SMR" id="Q98HE3"/>
<dbReference type="GeneID" id="66682318"/>
<dbReference type="KEGG" id="mlo:mlr2907"/>
<dbReference type="eggNOG" id="COG4786">
    <property type="taxonomic scope" value="Bacteria"/>
</dbReference>
<dbReference type="HOGENOM" id="CLU_013687_0_0_5"/>
<dbReference type="Proteomes" id="UP000000552">
    <property type="component" value="Chromosome"/>
</dbReference>
<dbReference type="GO" id="GO:0030694">
    <property type="term" value="C:bacterial-type flagellum basal body, rod"/>
    <property type="evidence" value="ECO:0007669"/>
    <property type="project" value="InterPro"/>
</dbReference>
<dbReference type="GO" id="GO:0071978">
    <property type="term" value="P:bacterial-type flagellum-dependent swarming motility"/>
    <property type="evidence" value="ECO:0007669"/>
    <property type="project" value="TreeGrafter"/>
</dbReference>
<dbReference type="InterPro" id="IPR001444">
    <property type="entry name" value="Flag_bb_rod_N"/>
</dbReference>
<dbReference type="InterPro" id="IPR019776">
    <property type="entry name" value="Flagellar_basal_body_rod_CS"/>
</dbReference>
<dbReference type="InterPro" id="IPR020013">
    <property type="entry name" value="Flagellar_FlgE/F/G"/>
</dbReference>
<dbReference type="InterPro" id="IPR010930">
    <property type="entry name" value="Flg_bb/hook_C_dom"/>
</dbReference>
<dbReference type="InterPro" id="IPR037925">
    <property type="entry name" value="FlgE/F/G-like"/>
</dbReference>
<dbReference type="InterPro" id="IPR012836">
    <property type="entry name" value="FlgF"/>
</dbReference>
<dbReference type="InterPro" id="IPR053967">
    <property type="entry name" value="LlgE_F_G-like_D1"/>
</dbReference>
<dbReference type="NCBIfam" id="TIGR03506">
    <property type="entry name" value="FlgEFG_subfam"/>
    <property type="match status" value="1"/>
</dbReference>
<dbReference type="NCBIfam" id="TIGR02490">
    <property type="entry name" value="flgF"/>
    <property type="match status" value="1"/>
</dbReference>
<dbReference type="NCBIfam" id="NF009282">
    <property type="entry name" value="PRK12642.1"/>
    <property type="match status" value="1"/>
</dbReference>
<dbReference type="PANTHER" id="PTHR30435:SF19">
    <property type="entry name" value="FLAGELLAR BASAL-BODY ROD PROTEIN FLGG"/>
    <property type="match status" value="1"/>
</dbReference>
<dbReference type="PANTHER" id="PTHR30435">
    <property type="entry name" value="FLAGELLAR PROTEIN"/>
    <property type="match status" value="1"/>
</dbReference>
<dbReference type="Pfam" id="PF00460">
    <property type="entry name" value="Flg_bb_rod"/>
    <property type="match status" value="1"/>
</dbReference>
<dbReference type="Pfam" id="PF06429">
    <property type="entry name" value="Flg_bbr_C"/>
    <property type="match status" value="1"/>
</dbReference>
<dbReference type="Pfam" id="PF22692">
    <property type="entry name" value="LlgE_F_G_D1"/>
    <property type="match status" value="1"/>
</dbReference>
<dbReference type="SUPFAM" id="SSF117143">
    <property type="entry name" value="Flagellar hook protein flgE"/>
    <property type="match status" value="1"/>
</dbReference>
<dbReference type="PROSITE" id="PS00588">
    <property type="entry name" value="FLAGELLA_BB_ROD"/>
    <property type="match status" value="1"/>
</dbReference>
<proteinExistence type="inferred from homology"/>
<reference key="1">
    <citation type="journal article" date="2000" name="DNA Res.">
        <title>Complete genome structure of the nitrogen-fixing symbiotic bacterium Mesorhizobium loti.</title>
        <authorList>
            <person name="Kaneko T."/>
            <person name="Nakamura Y."/>
            <person name="Sato S."/>
            <person name="Asamizu E."/>
            <person name="Kato T."/>
            <person name="Sasamoto S."/>
            <person name="Watanabe A."/>
            <person name="Idesawa K."/>
            <person name="Ishikawa A."/>
            <person name="Kawashima K."/>
            <person name="Kimura T."/>
            <person name="Kishida Y."/>
            <person name="Kiyokawa C."/>
            <person name="Kohara M."/>
            <person name="Matsumoto M."/>
            <person name="Matsuno A."/>
            <person name="Mochizuki Y."/>
            <person name="Nakayama S."/>
            <person name="Nakazaki N."/>
            <person name="Shimpo S."/>
            <person name="Sugimoto M."/>
            <person name="Takeuchi C."/>
            <person name="Yamada M."/>
            <person name="Tabata S."/>
        </authorList>
    </citation>
    <scope>NUCLEOTIDE SEQUENCE [LARGE SCALE GENOMIC DNA]</scope>
    <source>
        <strain>LMG 29417 / CECT 9101 / MAFF 303099</strain>
    </source>
</reference>
<comment type="subunit">
    <text evidence="1">The basal body constitutes a major portion of the flagellar organelle and consists of five rings (E,L,P,S, and M) mounted on a central rod. The rod consists of about 26 subunits of FlgG in the distal portion, and FlgB, FlgC and FlgF are thought to build up the proximal portion of the rod with about 6 subunits each (By similarity).</text>
</comment>
<comment type="subcellular location">
    <subcellularLocation>
        <location evidence="1">Bacterial flagellum basal body</location>
    </subcellularLocation>
</comment>
<comment type="similarity">
    <text evidence="2">Belongs to the flagella basal body rod proteins family.</text>
</comment>
<organism>
    <name type="scientific">Mesorhizobium japonicum (strain LMG 29417 / CECT 9101 / MAFF 303099)</name>
    <name type="common">Mesorhizobium loti (strain MAFF 303099)</name>
    <dbReference type="NCBI Taxonomy" id="266835"/>
    <lineage>
        <taxon>Bacteria</taxon>
        <taxon>Pseudomonadati</taxon>
        <taxon>Pseudomonadota</taxon>
        <taxon>Alphaproteobacteria</taxon>
        <taxon>Hyphomicrobiales</taxon>
        <taxon>Phyllobacteriaceae</taxon>
        <taxon>Mesorhizobium</taxon>
    </lineage>
</organism>
<feature type="chain" id="PRO_0000180840" description="Flagellar basal-body rod protein FlgF">
    <location>
        <begin position="1"/>
        <end position="241"/>
    </location>
</feature>